<proteinExistence type="predicted"/>
<gene>
    <name type="primary">ykoS</name>
    <name type="synonym">ykoR</name>
    <name type="ordered locus">BSU13380</name>
</gene>
<accession>O34830</accession>
<accession>Q796L0</accession>
<organism>
    <name type="scientific">Bacillus subtilis (strain 168)</name>
    <dbReference type="NCBI Taxonomy" id="224308"/>
    <lineage>
        <taxon>Bacteria</taxon>
        <taxon>Bacillati</taxon>
        <taxon>Bacillota</taxon>
        <taxon>Bacilli</taxon>
        <taxon>Bacillales</taxon>
        <taxon>Bacillaceae</taxon>
        <taxon>Bacillus</taxon>
    </lineage>
</organism>
<protein>
    <recommendedName>
        <fullName>Uncharacterized membrane protein YkoS</fullName>
    </recommendedName>
</protein>
<keyword id="KW-1003">Cell membrane</keyword>
<keyword id="KW-0472">Membrane</keyword>
<keyword id="KW-1185">Reference proteome</keyword>
<keyword id="KW-0812">Transmembrane</keyword>
<keyword id="KW-1133">Transmembrane helix</keyword>
<name>YKOS_BACSU</name>
<sequence length="564" mass="66504">MLRLMRQQKKETYYLWIALFLLLLYVSPLFILKEDAHIRVHDNLDSNIAWYKVLADSGEIVGKVDAAIPQIINGLPRDAFGTEWSGIVWLHAFFSSMTAYAISQTVTRVVAFFGMYVLLKKHIIPEPKAAFIRIGVSLAFALTPFWPSGMLSTLGYPLALWAFLNIRKGDISWREWLTLGLLPLYSSFVLGFFFFLAGMACFWLYDAITKRRWNLMFLGSIAFMTSIYLFVEYRLVYSMLFEHAPMHRIEFISSRHDVWHSLRLSIKNFVYGHNHVMTVHTVVILPILMVVFAALLFKRNRTKPENVYLFLCVLNYGLSLWYAFWFNKIWAVPKQKFAFLAEFNFARFHFLRPLVIYVSFALALYLIWRMGKGWKWLVYAAVAAQLMVLAPFNEEYTYGVHYNAPTFREFYASEQFKEIKEYIGRPQDSYRVASIGLHPSIAQYNGFYTLDTYNNLYPLSYKYEFRKIIEKELEKNSRLKQYFDEWGSRCYLFVDELGKRYDFKKNSKKTINNLQLNTDVFKKMGGRYIFSSVPIMNAEQNHLALVKTFDHKDSAWRIYLYETR</sequence>
<comment type="subcellular location">
    <subcellularLocation>
        <location evidence="2">Cell membrane</location>
        <topology evidence="2">Multi-pass membrane protein</topology>
    </subcellularLocation>
</comment>
<reference key="1">
    <citation type="submission" date="1997-11" db="EMBL/GenBank/DDBJ databases">
        <title>Sequence of the Bacillus subtilis genome between xlyA and ykoR.</title>
        <authorList>
            <person name="Devine K.M."/>
        </authorList>
    </citation>
    <scope>NUCLEOTIDE SEQUENCE [GENOMIC DNA]</scope>
    <source>
        <strain>168</strain>
    </source>
</reference>
<reference key="2">
    <citation type="journal article" date="1997" name="Nature">
        <title>The complete genome sequence of the Gram-positive bacterium Bacillus subtilis.</title>
        <authorList>
            <person name="Kunst F."/>
            <person name="Ogasawara N."/>
            <person name="Moszer I."/>
            <person name="Albertini A.M."/>
            <person name="Alloni G."/>
            <person name="Azevedo V."/>
            <person name="Bertero M.G."/>
            <person name="Bessieres P."/>
            <person name="Bolotin A."/>
            <person name="Borchert S."/>
            <person name="Borriss R."/>
            <person name="Boursier L."/>
            <person name="Brans A."/>
            <person name="Braun M."/>
            <person name="Brignell S.C."/>
            <person name="Bron S."/>
            <person name="Brouillet S."/>
            <person name="Bruschi C.V."/>
            <person name="Caldwell B."/>
            <person name="Capuano V."/>
            <person name="Carter N.M."/>
            <person name="Choi S.-K."/>
            <person name="Codani J.-J."/>
            <person name="Connerton I.F."/>
            <person name="Cummings N.J."/>
            <person name="Daniel R.A."/>
            <person name="Denizot F."/>
            <person name="Devine K.M."/>
            <person name="Duesterhoeft A."/>
            <person name="Ehrlich S.D."/>
            <person name="Emmerson P.T."/>
            <person name="Entian K.-D."/>
            <person name="Errington J."/>
            <person name="Fabret C."/>
            <person name="Ferrari E."/>
            <person name="Foulger D."/>
            <person name="Fritz C."/>
            <person name="Fujita M."/>
            <person name="Fujita Y."/>
            <person name="Fuma S."/>
            <person name="Galizzi A."/>
            <person name="Galleron N."/>
            <person name="Ghim S.-Y."/>
            <person name="Glaser P."/>
            <person name="Goffeau A."/>
            <person name="Golightly E.J."/>
            <person name="Grandi G."/>
            <person name="Guiseppi G."/>
            <person name="Guy B.J."/>
            <person name="Haga K."/>
            <person name="Haiech J."/>
            <person name="Harwood C.R."/>
            <person name="Henaut A."/>
            <person name="Hilbert H."/>
            <person name="Holsappel S."/>
            <person name="Hosono S."/>
            <person name="Hullo M.-F."/>
            <person name="Itaya M."/>
            <person name="Jones L.-M."/>
            <person name="Joris B."/>
            <person name="Karamata D."/>
            <person name="Kasahara Y."/>
            <person name="Klaerr-Blanchard M."/>
            <person name="Klein C."/>
            <person name="Kobayashi Y."/>
            <person name="Koetter P."/>
            <person name="Koningstein G."/>
            <person name="Krogh S."/>
            <person name="Kumano M."/>
            <person name="Kurita K."/>
            <person name="Lapidus A."/>
            <person name="Lardinois S."/>
            <person name="Lauber J."/>
            <person name="Lazarevic V."/>
            <person name="Lee S.-M."/>
            <person name="Levine A."/>
            <person name="Liu H."/>
            <person name="Masuda S."/>
            <person name="Mauel C."/>
            <person name="Medigue C."/>
            <person name="Medina N."/>
            <person name="Mellado R.P."/>
            <person name="Mizuno M."/>
            <person name="Moestl D."/>
            <person name="Nakai S."/>
            <person name="Noback M."/>
            <person name="Noone D."/>
            <person name="O'Reilly M."/>
            <person name="Ogawa K."/>
            <person name="Ogiwara A."/>
            <person name="Oudega B."/>
            <person name="Park S.-H."/>
            <person name="Parro V."/>
            <person name="Pohl T.M."/>
            <person name="Portetelle D."/>
            <person name="Porwollik S."/>
            <person name="Prescott A.M."/>
            <person name="Presecan E."/>
            <person name="Pujic P."/>
            <person name="Purnelle B."/>
            <person name="Rapoport G."/>
            <person name="Rey M."/>
            <person name="Reynolds S."/>
            <person name="Rieger M."/>
            <person name="Rivolta C."/>
            <person name="Rocha E."/>
            <person name="Roche B."/>
            <person name="Rose M."/>
            <person name="Sadaie Y."/>
            <person name="Sato T."/>
            <person name="Scanlan E."/>
            <person name="Schleich S."/>
            <person name="Schroeter R."/>
            <person name="Scoffone F."/>
            <person name="Sekiguchi J."/>
            <person name="Sekowska A."/>
            <person name="Seror S.J."/>
            <person name="Serror P."/>
            <person name="Shin B.-S."/>
            <person name="Soldo B."/>
            <person name="Sorokin A."/>
            <person name="Tacconi E."/>
            <person name="Takagi T."/>
            <person name="Takahashi H."/>
            <person name="Takemaru K."/>
            <person name="Takeuchi M."/>
            <person name="Tamakoshi A."/>
            <person name="Tanaka T."/>
            <person name="Terpstra P."/>
            <person name="Tognoni A."/>
            <person name="Tosato V."/>
            <person name="Uchiyama S."/>
            <person name="Vandenbol M."/>
            <person name="Vannier F."/>
            <person name="Vassarotti A."/>
            <person name="Viari A."/>
            <person name="Wambutt R."/>
            <person name="Wedler E."/>
            <person name="Wedler H."/>
            <person name="Weitzenegger T."/>
            <person name="Winters P."/>
            <person name="Wipat A."/>
            <person name="Yamamoto H."/>
            <person name="Yamane K."/>
            <person name="Yasumoto K."/>
            <person name="Yata K."/>
            <person name="Yoshida K."/>
            <person name="Yoshikawa H.-F."/>
            <person name="Zumstein E."/>
            <person name="Yoshikawa H."/>
            <person name="Danchin A."/>
        </authorList>
    </citation>
    <scope>NUCLEOTIDE SEQUENCE [LARGE SCALE GENOMIC DNA]</scope>
    <source>
        <strain>168</strain>
    </source>
</reference>
<dbReference type="EMBL" id="AJ002571">
    <property type="protein sequence ID" value="CAA05615.1"/>
    <property type="molecule type" value="Genomic_DNA"/>
</dbReference>
<dbReference type="EMBL" id="AL009126">
    <property type="protein sequence ID" value="CAB13195.1"/>
    <property type="molecule type" value="Genomic_DNA"/>
</dbReference>
<dbReference type="PIR" id="E69860">
    <property type="entry name" value="E69860"/>
</dbReference>
<dbReference type="RefSeq" id="NP_389221.1">
    <property type="nucleotide sequence ID" value="NC_000964.3"/>
</dbReference>
<dbReference type="RefSeq" id="WP_003245165.1">
    <property type="nucleotide sequence ID" value="NZ_OZ025638.1"/>
</dbReference>
<dbReference type="FunCoup" id="O34830">
    <property type="interactions" value="24"/>
</dbReference>
<dbReference type="STRING" id="224308.BSU13380"/>
<dbReference type="PaxDb" id="224308-BSU13380"/>
<dbReference type="EnsemblBacteria" id="CAB13195">
    <property type="protein sequence ID" value="CAB13195"/>
    <property type="gene ID" value="BSU_13380"/>
</dbReference>
<dbReference type="GeneID" id="939380"/>
<dbReference type="KEGG" id="bsu:BSU13380"/>
<dbReference type="PATRIC" id="fig|224308.179.peg.1453"/>
<dbReference type="eggNOG" id="ENOG502Z7KA">
    <property type="taxonomic scope" value="Bacteria"/>
</dbReference>
<dbReference type="InParanoid" id="O34830"/>
<dbReference type="OrthoDB" id="2349131at2"/>
<dbReference type="PhylomeDB" id="O34830"/>
<dbReference type="BioCyc" id="BSUB:BSU13380-MONOMER"/>
<dbReference type="Proteomes" id="UP000001570">
    <property type="component" value="Chromosome"/>
</dbReference>
<dbReference type="GO" id="GO:0005886">
    <property type="term" value="C:plasma membrane"/>
    <property type="evidence" value="ECO:0007669"/>
    <property type="project" value="UniProtKB-SubCell"/>
</dbReference>
<dbReference type="InterPro" id="IPR046107">
    <property type="entry name" value="DUF6044"/>
</dbReference>
<dbReference type="Pfam" id="PF19510">
    <property type="entry name" value="DUF6044"/>
    <property type="match status" value="1"/>
</dbReference>
<evidence type="ECO:0000255" key="1"/>
<evidence type="ECO:0000305" key="2"/>
<feature type="chain" id="PRO_0000378467" description="Uncharacterized membrane protein YkoS">
    <location>
        <begin position="1"/>
        <end position="564"/>
    </location>
</feature>
<feature type="transmembrane region" description="Helical" evidence="1">
    <location>
        <begin position="12"/>
        <end position="32"/>
    </location>
</feature>
<feature type="transmembrane region" description="Helical" evidence="1">
    <location>
        <begin position="97"/>
        <end position="119"/>
    </location>
</feature>
<feature type="transmembrane region" description="Helical" evidence="1">
    <location>
        <begin position="139"/>
        <end position="161"/>
    </location>
</feature>
<feature type="transmembrane region" description="Helical" evidence="1">
    <location>
        <begin position="188"/>
        <end position="208"/>
    </location>
</feature>
<feature type="transmembrane region" description="Helical" evidence="1">
    <location>
        <begin position="213"/>
        <end position="233"/>
    </location>
</feature>
<feature type="transmembrane region" description="Helical" evidence="1">
    <location>
        <begin position="277"/>
        <end position="297"/>
    </location>
</feature>
<feature type="transmembrane region" description="Helical" evidence="1">
    <location>
        <begin position="306"/>
        <end position="326"/>
    </location>
</feature>
<feature type="transmembrane region" description="Helical" evidence="1">
    <location>
        <begin position="348"/>
        <end position="368"/>
    </location>
</feature>